<sequence length="188" mass="21376">MSIMSDKWIREAVINHKMIEPFAEKQVRVKDSEKIISYGLSSYGYDARVSNEFKIFTNINSTMVDPKNFDKYNLVDREVDVCIIPPNSFALGRTVEYFKIPRDVLVICVGKSTYARCGIIVNVTPLEPEWEGHVTLEFSNTTPLPAKIYANEGACQFLFLKGDQICDLSYADRQGKYMKQLGVTLPLT</sequence>
<organism>
    <name type="scientific">Rickettsia bellii (strain RML369-C)</name>
    <dbReference type="NCBI Taxonomy" id="336407"/>
    <lineage>
        <taxon>Bacteria</taxon>
        <taxon>Pseudomonadati</taxon>
        <taxon>Pseudomonadota</taxon>
        <taxon>Alphaproteobacteria</taxon>
        <taxon>Rickettsiales</taxon>
        <taxon>Rickettsiaceae</taxon>
        <taxon>Rickettsieae</taxon>
        <taxon>Rickettsia</taxon>
        <taxon>belli group</taxon>
    </lineage>
</organism>
<evidence type="ECO:0000255" key="1">
    <source>
        <dbReference type="HAMAP-Rule" id="MF_00146"/>
    </source>
</evidence>
<comment type="function">
    <text evidence="1">Catalyzes the deamination of dCTP to dUTP.</text>
</comment>
<comment type="catalytic activity">
    <reaction evidence="1">
        <text>dCTP + H2O + H(+) = dUTP + NH4(+)</text>
        <dbReference type="Rhea" id="RHEA:22680"/>
        <dbReference type="ChEBI" id="CHEBI:15377"/>
        <dbReference type="ChEBI" id="CHEBI:15378"/>
        <dbReference type="ChEBI" id="CHEBI:28938"/>
        <dbReference type="ChEBI" id="CHEBI:61481"/>
        <dbReference type="ChEBI" id="CHEBI:61555"/>
        <dbReference type="EC" id="3.5.4.13"/>
    </reaction>
</comment>
<comment type="pathway">
    <text evidence="1">Pyrimidine metabolism; dUMP biosynthesis; dUMP from dCTP (dUTP route): step 1/2.</text>
</comment>
<comment type="subunit">
    <text evidence="1">Homotrimer.</text>
</comment>
<comment type="similarity">
    <text evidence="1">Belongs to the dCTP deaminase family.</text>
</comment>
<feature type="chain" id="PRO_0000277894" description="dCTP deaminase">
    <location>
        <begin position="1"/>
        <end position="188"/>
    </location>
</feature>
<feature type="active site" description="Proton donor/acceptor" evidence="1">
    <location>
        <position position="137"/>
    </location>
</feature>
<feature type="binding site" evidence="1">
    <location>
        <begin position="111"/>
        <end position="116"/>
    </location>
    <ligand>
        <name>dCTP</name>
        <dbReference type="ChEBI" id="CHEBI:61481"/>
    </ligand>
</feature>
<feature type="binding site" evidence="1">
    <location>
        <begin position="135"/>
        <end position="137"/>
    </location>
    <ligand>
        <name>dCTP</name>
        <dbReference type="ChEBI" id="CHEBI:61481"/>
    </ligand>
</feature>
<feature type="binding site" evidence="1">
    <location>
        <position position="156"/>
    </location>
    <ligand>
        <name>dCTP</name>
        <dbReference type="ChEBI" id="CHEBI:61481"/>
    </ligand>
</feature>
<feature type="binding site" evidence="1">
    <location>
        <position position="170"/>
    </location>
    <ligand>
        <name>dCTP</name>
        <dbReference type="ChEBI" id="CHEBI:61481"/>
    </ligand>
</feature>
<feature type="binding site" evidence="1">
    <location>
        <position position="179"/>
    </location>
    <ligand>
        <name>dCTP</name>
        <dbReference type="ChEBI" id="CHEBI:61481"/>
    </ligand>
</feature>
<feature type="binding site" evidence="1">
    <location>
        <position position="180"/>
    </location>
    <ligand>
        <name>dCTP</name>
        <dbReference type="ChEBI" id="CHEBI:61481"/>
    </ligand>
</feature>
<gene>
    <name evidence="1" type="primary">dcd</name>
    <name type="ordered locus">RBE_1297</name>
</gene>
<keyword id="KW-0378">Hydrolase</keyword>
<keyword id="KW-0546">Nucleotide metabolism</keyword>
<keyword id="KW-0547">Nucleotide-binding</keyword>
<name>DCD_RICBR</name>
<protein>
    <recommendedName>
        <fullName evidence="1">dCTP deaminase</fullName>
        <ecNumber evidence="1">3.5.4.13</ecNumber>
    </recommendedName>
    <alternativeName>
        <fullName evidence="1">Deoxycytidine triphosphate deaminase</fullName>
    </alternativeName>
</protein>
<dbReference type="EC" id="3.5.4.13" evidence="1"/>
<dbReference type="EMBL" id="CP000087">
    <property type="protein sequence ID" value="ABE05378.1"/>
    <property type="molecule type" value="Genomic_DNA"/>
</dbReference>
<dbReference type="RefSeq" id="WP_011477948.1">
    <property type="nucleotide sequence ID" value="NC_007940.1"/>
</dbReference>
<dbReference type="SMR" id="Q1RGY6"/>
<dbReference type="KEGG" id="rbe:RBE_1297"/>
<dbReference type="eggNOG" id="COG0717">
    <property type="taxonomic scope" value="Bacteria"/>
</dbReference>
<dbReference type="HOGENOM" id="CLU_087476_4_0_5"/>
<dbReference type="OrthoDB" id="9780956at2"/>
<dbReference type="UniPathway" id="UPA00610">
    <property type="reaction ID" value="UER00665"/>
</dbReference>
<dbReference type="Proteomes" id="UP000001951">
    <property type="component" value="Chromosome"/>
</dbReference>
<dbReference type="GO" id="GO:0008829">
    <property type="term" value="F:dCTP deaminase activity"/>
    <property type="evidence" value="ECO:0007669"/>
    <property type="project" value="UniProtKB-UniRule"/>
</dbReference>
<dbReference type="GO" id="GO:0000166">
    <property type="term" value="F:nucleotide binding"/>
    <property type="evidence" value="ECO:0007669"/>
    <property type="project" value="UniProtKB-KW"/>
</dbReference>
<dbReference type="GO" id="GO:0006226">
    <property type="term" value="P:dUMP biosynthetic process"/>
    <property type="evidence" value="ECO:0007669"/>
    <property type="project" value="UniProtKB-UniPathway"/>
</dbReference>
<dbReference type="GO" id="GO:0006229">
    <property type="term" value="P:dUTP biosynthetic process"/>
    <property type="evidence" value="ECO:0007669"/>
    <property type="project" value="UniProtKB-UniRule"/>
</dbReference>
<dbReference type="CDD" id="cd07557">
    <property type="entry name" value="trimeric_dUTPase"/>
    <property type="match status" value="1"/>
</dbReference>
<dbReference type="FunFam" id="2.70.40.10:FF:000001">
    <property type="entry name" value="dCTP deaminase"/>
    <property type="match status" value="1"/>
</dbReference>
<dbReference type="Gene3D" id="2.70.40.10">
    <property type="match status" value="1"/>
</dbReference>
<dbReference type="HAMAP" id="MF_00146">
    <property type="entry name" value="dCTP_deaminase"/>
    <property type="match status" value="1"/>
</dbReference>
<dbReference type="InterPro" id="IPR011962">
    <property type="entry name" value="dCTP_deaminase"/>
</dbReference>
<dbReference type="InterPro" id="IPR036157">
    <property type="entry name" value="dUTPase-like_sf"/>
</dbReference>
<dbReference type="InterPro" id="IPR033704">
    <property type="entry name" value="dUTPase_trimeric"/>
</dbReference>
<dbReference type="NCBIfam" id="TIGR02274">
    <property type="entry name" value="dCTP_deam"/>
    <property type="match status" value="1"/>
</dbReference>
<dbReference type="PANTHER" id="PTHR42680">
    <property type="entry name" value="DCTP DEAMINASE"/>
    <property type="match status" value="1"/>
</dbReference>
<dbReference type="PANTHER" id="PTHR42680:SF3">
    <property type="entry name" value="DCTP DEAMINASE"/>
    <property type="match status" value="1"/>
</dbReference>
<dbReference type="Pfam" id="PF22769">
    <property type="entry name" value="DCD"/>
    <property type="match status" value="1"/>
</dbReference>
<dbReference type="SUPFAM" id="SSF51283">
    <property type="entry name" value="dUTPase-like"/>
    <property type="match status" value="1"/>
</dbReference>
<proteinExistence type="inferred from homology"/>
<reference key="1">
    <citation type="journal article" date="2006" name="PLoS Genet.">
        <title>Genome sequence of Rickettsia bellii illuminates the role of amoebae in gene exchanges between intracellular pathogens.</title>
        <authorList>
            <person name="Ogata H."/>
            <person name="La Scola B."/>
            <person name="Audic S."/>
            <person name="Renesto P."/>
            <person name="Blanc G."/>
            <person name="Robert C."/>
            <person name="Fournier P.-E."/>
            <person name="Claverie J.-M."/>
            <person name="Raoult D."/>
        </authorList>
    </citation>
    <scope>NUCLEOTIDE SEQUENCE [LARGE SCALE GENOMIC DNA]</scope>
    <source>
        <strain>RML369-C</strain>
    </source>
</reference>
<accession>Q1RGY6</accession>